<proteinExistence type="inferred from homology"/>
<keyword id="KW-0249">Electron transport</keyword>
<keyword id="KW-0349">Heme</keyword>
<keyword id="KW-0408">Iron</keyword>
<keyword id="KW-0472">Membrane</keyword>
<keyword id="KW-0479">Metal-binding</keyword>
<keyword id="KW-0496">Mitochondrion</keyword>
<keyword id="KW-0999">Mitochondrion inner membrane</keyword>
<keyword id="KW-0679">Respiratory chain</keyword>
<keyword id="KW-0812">Transmembrane</keyword>
<keyword id="KW-1133">Transmembrane helix</keyword>
<keyword id="KW-0813">Transport</keyword>
<keyword id="KW-0830">Ubiquinone</keyword>
<comment type="function">
    <text evidence="2">Component of the ubiquinol-cytochrome c reductase complex (complex III or cytochrome b-c1 complex) that is part of the mitochondrial respiratory chain. The b-c1 complex mediates electron transfer from ubiquinol to cytochrome c. Contributes to the generation of a proton gradient across the mitochondrial membrane that is then used for ATP synthesis.</text>
</comment>
<comment type="cofactor">
    <cofactor evidence="2">
        <name>heme b</name>
        <dbReference type="ChEBI" id="CHEBI:60344"/>
    </cofactor>
    <text evidence="2">Binds 2 heme b groups non-covalently.</text>
</comment>
<comment type="subunit">
    <text evidence="2">The cytochrome bc1 complex contains 11 subunits: 3 respiratory subunits (MT-CYB, CYC1 and UQCRFS1), 2 core proteins (UQCRC1 and UQCRC2) and 6 low-molecular weight proteins (UQCRH/QCR6, UQCRB/QCR7, UQCRQ/QCR8, UQCR10/QCR9, UQCR11/QCR10 and a cleavage product of UQCRFS1). This cytochrome bc1 complex then forms a dimer.</text>
</comment>
<comment type="subcellular location">
    <subcellularLocation>
        <location evidence="2">Mitochondrion inner membrane</location>
        <topology evidence="2">Multi-pass membrane protein</topology>
    </subcellularLocation>
</comment>
<comment type="miscellaneous">
    <text evidence="1">Heme 1 (or BL or b562) is low-potential and absorbs at about 562 nm, and heme 2 (or BH or b566) is high-potential and absorbs at about 566 nm.</text>
</comment>
<comment type="similarity">
    <text evidence="3 4">Belongs to the cytochrome b family.</text>
</comment>
<comment type="caution">
    <text evidence="2">The full-length protein contains only eight transmembrane helices, not nine as predicted by bioinformatics tools.</text>
</comment>
<dbReference type="EMBL" id="AY380745">
    <property type="protein sequence ID" value="AAR91758.1"/>
    <property type="molecule type" value="Genomic_DNA"/>
</dbReference>
<dbReference type="SMR" id="Q597F1"/>
<dbReference type="GO" id="GO:0005743">
    <property type="term" value="C:mitochondrial inner membrane"/>
    <property type="evidence" value="ECO:0007669"/>
    <property type="project" value="UniProtKB-SubCell"/>
</dbReference>
<dbReference type="GO" id="GO:0045275">
    <property type="term" value="C:respiratory chain complex III"/>
    <property type="evidence" value="ECO:0007669"/>
    <property type="project" value="InterPro"/>
</dbReference>
<dbReference type="GO" id="GO:0046872">
    <property type="term" value="F:metal ion binding"/>
    <property type="evidence" value="ECO:0007669"/>
    <property type="project" value="UniProtKB-KW"/>
</dbReference>
<dbReference type="GO" id="GO:0008121">
    <property type="term" value="F:ubiquinol-cytochrome-c reductase activity"/>
    <property type="evidence" value="ECO:0007669"/>
    <property type="project" value="InterPro"/>
</dbReference>
<dbReference type="GO" id="GO:0006122">
    <property type="term" value="P:mitochondrial electron transport, ubiquinol to cytochrome c"/>
    <property type="evidence" value="ECO:0007669"/>
    <property type="project" value="TreeGrafter"/>
</dbReference>
<dbReference type="CDD" id="cd00290">
    <property type="entry name" value="cytochrome_b_C"/>
    <property type="match status" value="1"/>
</dbReference>
<dbReference type="CDD" id="cd00284">
    <property type="entry name" value="Cytochrome_b_N"/>
    <property type="match status" value="1"/>
</dbReference>
<dbReference type="FunFam" id="1.20.810.10:FF:000002">
    <property type="entry name" value="Cytochrome b"/>
    <property type="match status" value="1"/>
</dbReference>
<dbReference type="Gene3D" id="1.20.810.10">
    <property type="entry name" value="Cytochrome Bc1 Complex, Chain C"/>
    <property type="match status" value="1"/>
</dbReference>
<dbReference type="InterPro" id="IPR005798">
    <property type="entry name" value="Cyt_b/b6_C"/>
</dbReference>
<dbReference type="InterPro" id="IPR036150">
    <property type="entry name" value="Cyt_b/b6_C_sf"/>
</dbReference>
<dbReference type="InterPro" id="IPR005797">
    <property type="entry name" value="Cyt_b/b6_N"/>
</dbReference>
<dbReference type="InterPro" id="IPR027387">
    <property type="entry name" value="Cytb/b6-like_sf"/>
</dbReference>
<dbReference type="InterPro" id="IPR030689">
    <property type="entry name" value="Cytochrome_b"/>
</dbReference>
<dbReference type="InterPro" id="IPR048260">
    <property type="entry name" value="Cytochrome_b_C_euk/bac"/>
</dbReference>
<dbReference type="InterPro" id="IPR048259">
    <property type="entry name" value="Cytochrome_b_N_euk/bac"/>
</dbReference>
<dbReference type="InterPro" id="IPR016174">
    <property type="entry name" value="Di-haem_cyt_TM"/>
</dbReference>
<dbReference type="PANTHER" id="PTHR19271">
    <property type="entry name" value="CYTOCHROME B"/>
    <property type="match status" value="1"/>
</dbReference>
<dbReference type="PANTHER" id="PTHR19271:SF16">
    <property type="entry name" value="CYTOCHROME B"/>
    <property type="match status" value="1"/>
</dbReference>
<dbReference type="Pfam" id="PF00032">
    <property type="entry name" value="Cytochrom_B_C"/>
    <property type="match status" value="1"/>
</dbReference>
<dbReference type="Pfam" id="PF00033">
    <property type="entry name" value="Cytochrome_B"/>
    <property type="match status" value="1"/>
</dbReference>
<dbReference type="PIRSF" id="PIRSF038885">
    <property type="entry name" value="COB"/>
    <property type="match status" value="1"/>
</dbReference>
<dbReference type="SUPFAM" id="SSF81648">
    <property type="entry name" value="a domain/subunit of cytochrome bc1 complex (Ubiquinol-cytochrome c reductase)"/>
    <property type="match status" value="1"/>
</dbReference>
<dbReference type="SUPFAM" id="SSF81342">
    <property type="entry name" value="Transmembrane di-heme cytochromes"/>
    <property type="match status" value="1"/>
</dbReference>
<dbReference type="PROSITE" id="PS51003">
    <property type="entry name" value="CYTB_CTER"/>
    <property type="match status" value="1"/>
</dbReference>
<dbReference type="PROSITE" id="PS51002">
    <property type="entry name" value="CYTB_NTER"/>
    <property type="match status" value="1"/>
</dbReference>
<feature type="chain" id="PRO_0000254816" description="Cytochrome b">
    <location>
        <begin position="1"/>
        <end position="379"/>
    </location>
</feature>
<feature type="transmembrane region" description="Helical" evidence="2">
    <location>
        <begin position="33"/>
        <end position="53"/>
    </location>
</feature>
<feature type="transmembrane region" description="Helical" evidence="2">
    <location>
        <begin position="77"/>
        <end position="98"/>
    </location>
</feature>
<feature type="transmembrane region" description="Helical" evidence="2">
    <location>
        <begin position="113"/>
        <end position="133"/>
    </location>
</feature>
<feature type="transmembrane region" description="Helical" evidence="2">
    <location>
        <begin position="178"/>
        <end position="198"/>
    </location>
</feature>
<feature type="transmembrane region" description="Helical" evidence="2">
    <location>
        <begin position="226"/>
        <end position="246"/>
    </location>
</feature>
<feature type="transmembrane region" description="Helical" evidence="2">
    <location>
        <begin position="288"/>
        <end position="308"/>
    </location>
</feature>
<feature type="transmembrane region" description="Helical" evidence="2">
    <location>
        <begin position="320"/>
        <end position="340"/>
    </location>
</feature>
<feature type="transmembrane region" description="Helical" evidence="2">
    <location>
        <begin position="347"/>
        <end position="367"/>
    </location>
</feature>
<feature type="binding site" description="axial binding residue" evidence="2">
    <location>
        <position position="83"/>
    </location>
    <ligand>
        <name>heme b</name>
        <dbReference type="ChEBI" id="CHEBI:60344"/>
        <label>b562</label>
    </ligand>
    <ligandPart>
        <name>Fe</name>
        <dbReference type="ChEBI" id="CHEBI:18248"/>
    </ligandPart>
</feature>
<feature type="binding site" description="axial binding residue" evidence="2">
    <location>
        <position position="97"/>
    </location>
    <ligand>
        <name>heme b</name>
        <dbReference type="ChEBI" id="CHEBI:60344"/>
        <label>b566</label>
    </ligand>
    <ligandPart>
        <name>Fe</name>
        <dbReference type="ChEBI" id="CHEBI:18248"/>
    </ligandPart>
</feature>
<feature type="binding site" description="axial binding residue" evidence="2">
    <location>
        <position position="182"/>
    </location>
    <ligand>
        <name>heme b</name>
        <dbReference type="ChEBI" id="CHEBI:60344"/>
        <label>b562</label>
    </ligand>
    <ligandPart>
        <name>Fe</name>
        <dbReference type="ChEBI" id="CHEBI:18248"/>
    </ligandPart>
</feature>
<feature type="binding site" description="axial binding residue" evidence="2">
    <location>
        <position position="196"/>
    </location>
    <ligand>
        <name>heme b</name>
        <dbReference type="ChEBI" id="CHEBI:60344"/>
        <label>b566</label>
    </ligand>
    <ligandPart>
        <name>Fe</name>
        <dbReference type="ChEBI" id="CHEBI:18248"/>
    </ligandPart>
</feature>
<feature type="binding site" evidence="2">
    <location>
        <position position="201"/>
    </location>
    <ligand>
        <name>a ubiquinone</name>
        <dbReference type="ChEBI" id="CHEBI:16389"/>
    </ligand>
</feature>
<gene>
    <name type="primary">MT-CYB</name>
    <name type="synonym">COB</name>
    <name type="synonym">CYTB</name>
    <name type="synonym">MTCYB</name>
</gene>
<name>CYB_MACWA</name>
<sequence length="379" mass="42937">MTNIRKTHPLLKIINNSFVDLPTPSSLSSWWNFGSLLGVCLAVQIMTGLFLAMHYTSDTTTAFNSVTHICRDVNYGWLLRYLHANGASMFFICLYLHVGRGLYYGSYTYLETWNIGIILLFAVMATAFMGYVLPWGQMSFWGATVITNLLSAIPYIGTELVQWIWGGFSVDKATLTRFFAFHFLLPFIISALVMVHLLFLHETGSNNPTGIPSNSDMIPFHPYYTIKDILGFLIMLTTLSLLVLFSPDLLGDPDNYIPANPLNTPPHIKPEWYFLFAYAILRSIPNKLGGVLALVLSILILAIIPMLHTSKQRSMMFRPTSQFLFWLLVADLLTLTWIGGQPVEYPYIMIGQVASILYFLTILILMPLISTMENQMLKW</sequence>
<organism>
    <name type="scientific">Macrotus waterhousii</name>
    <name type="common">Waterhouse's leaf-nosed bat</name>
    <dbReference type="NCBI Taxonomy" id="124750"/>
    <lineage>
        <taxon>Eukaryota</taxon>
        <taxon>Metazoa</taxon>
        <taxon>Chordata</taxon>
        <taxon>Craniata</taxon>
        <taxon>Vertebrata</taxon>
        <taxon>Euteleostomi</taxon>
        <taxon>Mammalia</taxon>
        <taxon>Eutheria</taxon>
        <taxon>Laurasiatheria</taxon>
        <taxon>Chiroptera</taxon>
        <taxon>Yangochiroptera</taxon>
        <taxon>Phyllostomidae</taxon>
        <taxon>Phyllostominae</taxon>
        <taxon>Macrotus</taxon>
    </lineage>
</organism>
<protein>
    <recommendedName>
        <fullName>Cytochrome b</fullName>
    </recommendedName>
    <alternativeName>
        <fullName>Complex III subunit 3</fullName>
    </alternativeName>
    <alternativeName>
        <fullName>Complex III subunit III</fullName>
    </alternativeName>
    <alternativeName>
        <fullName>Cytochrome b-c1 complex subunit 3</fullName>
    </alternativeName>
    <alternativeName>
        <fullName>Ubiquinol-cytochrome-c reductase complex cytochrome b subunit</fullName>
    </alternativeName>
</protein>
<reference key="1">
    <citation type="submission" date="2003-09" db="EMBL/GenBank/DDBJ databases">
        <title>Molecular evidence for unrecognized biodiversity in the bat genus Micronycteris (Phyllostomidae), with descriptions of two new subgenera.</title>
        <authorList>
            <person name="Porter C.A."/>
            <person name="Hoofer S.R."/>
            <person name="Cline C.A."/>
            <person name="Hoffmann F.G."/>
            <person name="Baker R.J."/>
        </authorList>
    </citation>
    <scope>NUCLEOTIDE SEQUENCE [GENOMIC DNA]</scope>
</reference>
<geneLocation type="mitochondrion"/>
<accession>Q597F1</accession>
<evidence type="ECO:0000250" key="1"/>
<evidence type="ECO:0000250" key="2">
    <source>
        <dbReference type="UniProtKB" id="P00157"/>
    </source>
</evidence>
<evidence type="ECO:0000255" key="3">
    <source>
        <dbReference type="PROSITE-ProRule" id="PRU00967"/>
    </source>
</evidence>
<evidence type="ECO:0000255" key="4">
    <source>
        <dbReference type="PROSITE-ProRule" id="PRU00968"/>
    </source>
</evidence>